<name>ACPS_CHLT2</name>
<protein>
    <recommendedName>
        <fullName evidence="1">Holo-[acyl-carrier-protein] synthase</fullName>
        <shortName evidence="1">Holo-ACP synthase</shortName>
        <ecNumber evidence="1">2.7.8.7</ecNumber>
    </recommendedName>
    <alternativeName>
        <fullName evidence="1">4'-phosphopantetheinyl transferase AcpS</fullName>
    </alternativeName>
</protein>
<feature type="chain" id="PRO_1000093866" description="Holo-[acyl-carrier-protein] synthase">
    <location>
        <begin position="1"/>
        <end position="119"/>
    </location>
</feature>
<feature type="binding site" evidence="1">
    <location>
        <position position="7"/>
    </location>
    <ligand>
        <name>Mg(2+)</name>
        <dbReference type="ChEBI" id="CHEBI:18420"/>
    </ligand>
</feature>
<feature type="binding site" evidence="1">
    <location>
        <position position="56"/>
    </location>
    <ligand>
        <name>Mg(2+)</name>
        <dbReference type="ChEBI" id="CHEBI:18420"/>
    </ligand>
</feature>
<reference key="1">
    <citation type="journal article" date="2008" name="Genome Res.">
        <title>Chlamydia trachomatis: genome sequence analysis of lymphogranuloma venereum isolates.</title>
        <authorList>
            <person name="Thomson N.R."/>
            <person name="Holden M.T.G."/>
            <person name="Carder C."/>
            <person name="Lennard N."/>
            <person name="Lockey S.J."/>
            <person name="Marsh P."/>
            <person name="Skipp P."/>
            <person name="O'Connor C.D."/>
            <person name="Goodhead I."/>
            <person name="Norbertzcak H."/>
            <person name="Harris B."/>
            <person name="Ormond D."/>
            <person name="Rance R."/>
            <person name="Quail M.A."/>
            <person name="Parkhill J."/>
            <person name="Stephens R.S."/>
            <person name="Clarke I.N."/>
        </authorList>
    </citation>
    <scope>NUCLEOTIDE SEQUENCE [LARGE SCALE GENOMIC DNA]</scope>
    <source>
        <strain>ATCC VR-902B / DSM 19102 / 434/Bu</strain>
    </source>
</reference>
<keyword id="KW-0963">Cytoplasm</keyword>
<keyword id="KW-0275">Fatty acid biosynthesis</keyword>
<keyword id="KW-0276">Fatty acid metabolism</keyword>
<keyword id="KW-0444">Lipid biosynthesis</keyword>
<keyword id="KW-0443">Lipid metabolism</keyword>
<keyword id="KW-0460">Magnesium</keyword>
<keyword id="KW-0479">Metal-binding</keyword>
<keyword id="KW-0808">Transferase</keyword>
<accession>B0B9K8</accession>
<comment type="function">
    <text evidence="1">Transfers the 4'-phosphopantetheine moiety from coenzyme A to a Ser of acyl-carrier-protein.</text>
</comment>
<comment type="catalytic activity">
    <reaction evidence="1">
        <text>apo-[ACP] + CoA = holo-[ACP] + adenosine 3',5'-bisphosphate + H(+)</text>
        <dbReference type="Rhea" id="RHEA:12068"/>
        <dbReference type="Rhea" id="RHEA-COMP:9685"/>
        <dbReference type="Rhea" id="RHEA-COMP:9690"/>
        <dbReference type="ChEBI" id="CHEBI:15378"/>
        <dbReference type="ChEBI" id="CHEBI:29999"/>
        <dbReference type="ChEBI" id="CHEBI:57287"/>
        <dbReference type="ChEBI" id="CHEBI:58343"/>
        <dbReference type="ChEBI" id="CHEBI:64479"/>
        <dbReference type="EC" id="2.7.8.7"/>
    </reaction>
</comment>
<comment type="cofactor">
    <cofactor evidence="1">
        <name>Mg(2+)</name>
        <dbReference type="ChEBI" id="CHEBI:18420"/>
    </cofactor>
</comment>
<comment type="subcellular location">
    <subcellularLocation>
        <location evidence="1">Cytoplasm</location>
    </subcellularLocation>
</comment>
<comment type="similarity">
    <text evidence="1">Belongs to the P-Pant transferase superfamily. AcpS family.</text>
</comment>
<sequence>MFGVGIDIIEIDRIRKSYQTYGDRFLKKIFTEGERVYCFSKSNPYASLAARFAAKEAVAKALGTGIGKLLKWKEIEMRRDSRQPQVVVPEALLCSLGVKRVLLSVSHSREYATAVAIAE</sequence>
<gene>
    <name evidence="1" type="primary">acpS</name>
    <name type="ordered locus">CTL0355</name>
</gene>
<dbReference type="EC" id="2.7.8.7" evidence="1"/>
<dbReference type="EMBL" id="AM884176">
    <property type="protein sequence ID" value="CAP03795.1"/>
    <property type="molecule type" value="Genomic_DNA"/>
</dbReference>
<dbReference type="RefSeq" id="WP_009873555.1">
    <property type="nucleotide sequence ID" value="NC_010287.1"/>
</dbReference>
<dbReference type="RefSeq" id="YP_001654439.1">
    <property type="nucleotide sequence ID" value="NC_010287.1"/>
</dbReference>
<dbReference type="SMR" id="B0B9K8"/>
<dbReference type="KEGG" id="ctb:CTL0355"/>
<dbReference type="PATRIC" id="fig|471472.4.peg.384"/>
<dbReference type="HOGENOM" id="CLU_089696_0_2_0"/>
<dbReference type="Proteomes" id="UP001154402">
    <property type="component" value="Chromosome"/>
</dbReference>
<dbReference type="GO" id="GO:0005737">
    <property type="term" value="C:cytoplasm"/>
    <property type="evidence" value="ECO:0007669"/>
    <property type="project" value="UniProtKB-SubCell"/>
</dbReference>
<dbReference type="GO" id="GO:0008897">
    <property type="term" value="F:holo-[acyl-carrier-protein] synthase activity"/>
    <property type="evidence" value="ECO:0007669"/>
    <property type="project" value="UniProtKB-UniRule"/>
</dbReference>
<dbReference type="GO" id="GO:0000287">
    <property type="term" value="F:magnesium ion binding"/>
    <property type="evidence" value="ECO:0007669"/>
    <property type="project" value="UniProtKB-UniRule"/>
</dbReference>
<dbReference type="GO" id="GO:0006633">
    <property type="term" value="P:fatty acid biosynthetic process"/>
    <property type="evidence" value="ECO:0007669"/>
    <property type="project" value="UniProtKB-UniRule"/>
</dbReference>
<dbReference type="Gene3D" id="3.90.470.20">
    <property type="entry name" value="4'-phosphopantetheinyl transferase domain"/>
    <property type="match status" value="1"/>
</dbReference>
<dbReference type="HAMAP" id="MF_00101">
    <property type="entry name" value="AcpS"/>
    <property type="match status" value="1"/>
</dbReference>
<dbReference type="InterPro" id="IPR008278">
    <property type="entry name" value="4-PPantetheinyl_Trfase_dom"/>
</dbReference>
<dbReference type="InterPro" id="IPR037143">
    <property type="entry name" value="4-PPantetheinyl_Trfase_dom_sf"/>
</dbReference>
<dbReference type="InterPro" id="IPR002582">
    <property type="entry name" value="ACPS"/>
</dbReference>
<dbReference type="InterPro" id="IPR004568">
    <property type="entry name" value="Ppantetheine-prot_Trfase_dom"/>
</dbReference>
<dbReference type="NCBIfam" id="TIGR00516">
    <property type="entry name" value="acpS"/>
    <property type="match status" value="1"/>
</dbReference>
<dbReference type="NCBIfam" id="TIGR00556">
    <property type="entry name" value="pantethn_trn"/>
    <property type="match status" value="1"/>
</dbReference>
<dbReference type="Pfam" id="PF01648">
    <property type="entry name" value="ACPS"/>
    <property type="match status" value="1"/>
</dbReference>
<dbReference type="SUPFAM" id="SSF56214">
    <property type="entry name" value="4'-phosphopantetheinyl transferase"/>
    <property type="match status" value="1"/>
</dbReference>
<organism>
    <name type="scientific">Chlamydia trachomatis serovar L2 (strain ATCC VR-902B / DSM 19102 / 434/Bu)</name>
    <dbReference type="NCBI Taxonomy" id="471472"/>
    <lineage>
        <taxon>Bacteria</taxon>
        <taxon>Pseudomonadati</taxon>
        <taxon>Chlamydiota</taxon>
        <taxon>Chlamydiia</taxon>
        <taxon>Chlamydiales</taxon>
        <taxon>Chlamydiaceae</taxon>
        <taxon>Chlamydia/Chlamydophila group</taxon>
        <taxon>Chlamydia</taxon>
    </lineage>
</organism>
<proteinExistence type="inferred from homology"/>
<evidence type="ECO:0000255" key="1">
    <source>
        <dbReference type="HAMAP-Rule" id="MF_00101"/>
    </source>
</evidence>